<organism>
    <name type="scientific">Pectobacterium atrosepticum (strain SCRI 1043 / ATCC BAA-672)</name>
    <name type="common">Erwinia carotovora subsp. atroseptica</name>
    <dbReference type="NCBI Taxonomy" id="218491"/>
    <lineage>
        <taxon>Bacteria</taxon>
        <taxon>Pseudomonadati</taxon>
        <taxon>Pseudomonadota</taxon>
        <taxon>Gammaproteobacteria</taxon>
        <taxon>Enterobacterales</taxon>
        <taxon>Pectobacteriaceae</taxon>
        <taxon>Pectobacterium</taxon>
    </lineage>
</organism>
<accession>Q6D5Z2</accession>
<evidence type="ECO:0000255" key="1">
    <source>
        <dbReference type="HAMAP-Rule" id="MF_01630"/>
    </source>
</evidence>
<dbReference type="EC" id="1.9.6.1" evidence="1"/>
<dbReference type="EMBL" id="BX950851">
    <property type="protein sequence ID" value="CAG74799.1"/>
    <property type="molecule type" value="Genomic_DNA"/>
</dbReference>
<dbReference type="RefSeq" id="WP_011093464.1">
    <property type="nucleotide sequence ID" value="NC_004547.2"/>
</dbReference>
<dbReference type="SMR" id="Q6D5Z2"/>
<dbReference type="STRING" id="218491.ECA1896"/>
<dbReference type="KEGG" id="eca:ECA1896"/>
<dbReference type="PATRIC" id="fig|218491.5.peg.1926"/>
<dbReference type="eggNOG" id="COG0243">
    <property type="taxonomic scope" value="Bacteria"/>
</dbReference>
<dbReference type="HOGENOM" id="CLU_000422_13_4_6"/>
<dbReference type="OrthoDB" id="9816402at2"/>
<dbReference type="Proteomes" id="UP000007966">
    <property type="component" value="Chromosome"/>
</dbReference>
<dbReference type="GO" id="GO:0016020">
    <property type="term" value="C:membrane"/>
    <property type="evidence" value="ECO:0007669"/>
    <property type="project" value="TreeGrafter"/>
</dbReference>
<dbReference type="GO" id="GO:0009325">
    <property type="term" value="C:nitrate reductase complex"/>
    <property type="evidence" value="ECO:0007669"/>
    <property type="project" value="TreeGrafter"/>
</dbReference>
<dbReference type="GO" id="GO:0042597">
    <property type="term" value="C:periplasmic space"/>
    <property type="evidence" value="ECO:0007669"/>
    <property type="project" value="UniProtKB-SubCell"/>
</dbReference>
<dbReference type="GO" id="GO:0051539">
    <property type="term" value="F:4 iron, 4 sulfur cluster binding"/>
    <property type="evidence" value="ECO:0007669"/>
    <property type="project" value="UniProtKB-KW"/>
</dbReference>
<dbReference type="GO" id="GO:0009055">
    <property type="term" value="F:electron transfer activity"/>
    <property type="evidence" value="ECO:0007669"/>
    <property type="project" value="UniProtKB-UniRule"/>
</dbReference>
<dbReference type="GO" id="GO:0005506">
    <property type="term" value="F:iron ion binding"/>
    <property type="evidence" value="ECO:0007669"/>
    <property type="project" value="UniProtKB-UniRule"/>
</dbReference>
<dbReference type="GO" id="GO:0030151">
    <property type="term" value="F:molybdenum ion binding"/>
    <property type="evidence" value="ECO:0007669"/>
    <property type="project" value="InterPro"/>
</dbReference>
<dbReference type="GO" id="GO:0043546">
    <property type="term" value="F:molybdopterin cofactor binding"/>
    <property type="evidence" value="ECO:0007669"/>
    <property type="project" value="InterPro"/>
</dbReference>
<dbReference type="GO" id="GO:0050140">
    <property type="term" value="F:nitrate reductase (cytochrome) activity"/>
    <property type="evidence" value="ECO:0007669"/>
    <property type="project" value="UniProtKB-EC"/>
</dbReference>
<dbReference type="GO" id="GO:0045333">
    <property type="term" value="P:cellular respiration"/>
    <property type="evidence" value="ECO:0007669"/>
    <property type="project" value="UniProtKB-ARBA"/>
</dbReference>
<dbReference type="GO" id="GO:0006777">
    <property type="term" value="P:Mo-molybdopterin cofactor biosynthetic process"/>
    <property type="evidence" value="ECO:0007669"/>
    <property type="project" value="UniProtKB-UniRule"/>
</dbReference>
<dbReference type="GO" id="GO:0042128">
    <property type="term" value="P:nitrate assimilation"/>
    <property type="evidence" value="ECO:0007669"/>
    <property type="project" value="UniProtKB-UniRule"/>
</dbReference>
<dbReference type="CDD" id="cd02791">
    <property type="entry name" value="MopB_CT_Nitrate-R-NapA-like"/>
    <property type="match status" value="1"/>
</dbReference>
<dbReference type="CDD" id="cd02754">
    <property type="entry name" value="MopB_Nitrate-R-NapA-like"/>
    <property type="match status" value="1"/>
</dbReference>
<dbReference type="FunFam" id="2.40.40.20:FF:000005">
    <property type="entry name" value="Periplasmic nitrate reductase"/>
    <property type="match status" value="1"/>
</dbReference>
<dbReference type="Gene3D" id="2.40.40.20">
    <property type="match status" value="1"/>
</dbReference>
<dbReference type="Gene3D" id="3.30.200.210">
    <property type="match status" value="1"/>
</dbReference>
<dbReference type="Gene3D" id="3.40.50.740">
    <property type="match status" value="1"/>
</dbReference>
<dbReference type="Gene3D" id="3.40.228.10">
    <property type="entry name" value="Dimethylsulfoxide Reductase, domain 2"/>
    <property type="match status" value="1"/>
</dbReference>
<dbReference type="HAMAP" id="MF_01630">
    <property type="entry name" value="Nitrate_reduct_NapA"/>
    <property type="match status" value="1"/>
</dbReference>
<dbReference type="InterPro" id="IPR009010">
    <property type="entry name" value="Asp_de-COase-like_dom_sf"/>
</dbReference>
<dbReference type="InterPro" id="IPR041957">
    <property type="entry name" value="CT_Nitrate-R-NapA-like"/>
</dbReference>
<dbReference type="InterPro" id="IPR006657">
    <property type="entry name" value="MoPterin_dinucl-bd_dom"/>
</dbReference>
<dbReference type="InterPro" id="IPR006656">
    <property type="entry name" value="Mopterin_OxRdtase"/>
</dbReference>
<dbReference type="InterPro" id="IPR006963">
    <property type="entry name" value="Mopterin_OxRdtase_4Fe-4S_dom"/>
</dbReference>
<dbReference type="InterPro" id="IPR027467">
    <property type="entry name" value="MopterinOxRdtase_cofactor_BS"/>
</dbReference>
<dbReference type="InterPro" id="IPR010051">
    <property type="entry name" value="Periplasm_NO3_reductase_lsu"/>
</dbReference>
<dbReference type="InterPro" id="IPR050123">
    <property type="entry name" value="Prok_molybdopt-oxidoreductase"/>
</dbReference>
<dbReference type="InterPro" id="IPR006311">
    <property type="entry name" value="TAT_signal"/>
</dbReference>
<dbReference type="InterPro" id="IPR019546">
    <property type="entry name" value="TAT_signal_bac_arc"/>
</dbReference>
<dbReference type="NCBIfam" id="TIGR01706">
    <property type="entry name" value="NAPA"/>
    <property type="match status" value="1"/>
</dbReference>
<dbReference type="NCBIfam" id="NF010055">
    <property type="entry name" value="PRK13532.1"/>
    <property type="match status" value="1"/>
</dbReference>
<dbReference type="NCBIfam" id="TIGR01409">
    <property type="entry name" value="TAT_signal_seq"/>
    <property type="match status" value="1"/>
</dbReference>
<dbReference type="PANTHER" id="PTHR43105:SF11">
    <property type="entry name" value="PERIPLASMIC NITRATE REDUCTASE"/>
    <property type="match status" value="1"/>
</dbReference>
<dbReference type="PANTHER" id="PTHR43105">
    <property type="entry name" value="RESPIRATORY NITRATE REDUCTASE"/>
    <property type="match status" value="1"/>
</dbReference>
<dbReference type="Pfam" id="PF04879">
    <property type="entry name" value="Molybdop_Fe4S4"/>
    <property type="match status" value="1"/>
</dbReference>
<dbReference type="Pfam" id="PF00384">
    <property type="entry name" value="Molybdopterin"/>
    <property type="match status" value="1"/>
</dbReference>
<dbReference type="Pfam" id="PF01568">
    <property type="entry name" value="Molydop_binding"/>
    <property type="match status" value="1"/>
</dbReference>
<dbReference type="SMART" id="SM00926">
    <property type="entry name" value="Molybdop_Fe4S4"/>
    <property type="match status" value="1"/>
</dbReference>
<dbReference type="SUPFAM" id="SSF50692">
    <property type="entry name" value="ADC-like"/>
    <property type="match status" value="1"/>
</dbReference>
<dbReference type="SUPFAM" id="SSF53706">
    <property type="entry name" value="Formate dehydrogenase/DMSO reductase, domains 1-3"/>
    <property type="match status" value="1"/>
</dbReference>
<dbReference type="PROSITE" id="PS51669">
    <property type="entry name" value="4FE4S_MOW_BIS_MGD"/>
    <property type="match status" value="1"/>
</dbReference>
<dbReference type="PROSITE" id="PS00551">
    <property type="entry name" value="MOLYBDOPTERIN_PROK_1"/>
    <property type="match status" value="1"/>
</dbReference>
<dbReference type="PROSITE" id="PS51318">
    <property type="entry name" value="TAT"/>
    <property type="match status" value="1"/>
</dbReference>
<comment type="function">
    <text evidence="1">Catalytic subunit of the periplasmic nitrate reductase complex NapAB. Receives electrons from NapB and catalyzes the reduction of nitrate to nitrite.</text>
</comment>
<comment type="catalytic activity">
    <reaction evidence="1">
        <text>2 Fe(II)-[cytochrome] + nitrate + 2 H(+) = 2 Fe(III)-[cytochrome] + nitrite + H2O</text>
        <dbReference type="Rhea" id="RHEA:12909"/>
        <dbReference type="Rhea" id="RHEA-COMP:11777"/>
        <dbReference type="Rhea" id="RHEA-COMP:11778"/>
        <dbReference type="ChEBI" id="CHEBI:15377"/>
        <dbReference type="ChEBI" id="CHEBI:15378"/>
        <dbReference type="ChEBI" id="CHEBI:16301"/>
        <dbReference type="ChEBI" id="CHEBI:17632"/>
        <dbReference type="ChEBI" id="CHEBI:29033"/>
        <dbReference type="ChEBI" id="CHEBI:29034"/>
        <dbReference type="EC" id="1.9.6.1"/>
    </reaction>
</comment>
<comment type="cofactor">
    <cofactor evidence="1">
        <name>[4Fe-4S] cluster</name>
        <dbReference type="ChEBI" id="CHEBI:49883"/>
    </cofactor>
    <text evidence="1">Binds 1 [4Fe-4S] cluster.</text>
</comment>
<comment type="cofactor">
    <cofactor evidence="1">
        <name>Mo-bis(molybdopterin guanine dinucleotide)</name>
        <dbReference type="ChEBI" id="CHEBI:60539"/>
    </cofactor>
    <text evidence="1">Binds 1 molybdenum-bis(molybdopterin guanine dinucleotide) (Mo-bis-MGD) cofactor per subunit.</text>
</comment>
<comment type="subunit">
    <text evidence="1">Component of the periplasmic nitrate reductase NapAB complex composed of NapA and NapB.</text>
</comment>
<comment type="subcellular location">
    <subcellularLocation>
        <location evidence="1">Periplasm</location>
    </subcellularLocation>
</comment>
<comment type="PTM">
    <text evidence="1">Predicted to be exported by the Tat system. The position of the signal peptide cleavage has not been experimentally proven.</text>
</comment>
<comment type="similarity">
    <text evidence="1">Belongs to the prokaryotic molybdopterin-containing oxidoreductase family. NasA/NapA/NarB subfamily.</text>
</comment>
<feature type="signal peptide" description="Tat-type signal" evidence="1">
    <location>
        <begin position="1"/>
        <end position="31"/>
    </location>
</feature>
<feature type="chain" id="PRO_0000045984" description="Periplasmic nitrate reductase" evidence="1">
    <location>
        <begin position="32"/>
        <end position="828"/>
    </location>
</feature>
<feature type="domain" description="4Fe-4S Mo/W bis-MGD-type" evidence="1">
    <location>
        <begin position="39"/>
        <end position="95"/>
    </location>
</feature>
<feature type="binding site" evidence="1">
    <location>
        <position position="46"/>
    </location>
    <ligand>
        <name>[4Fe-4S] cluster</name>
        <dbReference type="ChEBI" id="CHEBI:49883"/>
    </ligand>
</feature>
<feature type="binding site" evidence="1">
    <location>
        <position position="49"/>
    </location>
    <ligand>
        <name>[4Fe-4S] cluster</name>
        <dbReference type="ChEBI" id="CHEBI:49883"/>
    </ligand>
</feature>
<feature type="binding site" evidence="1">
    <location>
        <position position="53"/>
    </location>
    <ligand>
        <name>[4Fe-4S] cluster</name>
        <dbReference type="ChEBI" id="CHEBI:49883"/>
    </ligand>
</feature>
<feature type="binding site" evidence="1">
    <location>
        <position position="81"/>
    </location>
    <ligand>
        <name>[4Fe-4S] cluster</name>
        <dbReference type="ChEBI" id="CHEBI:49883"/>
    </ligand>
</feature>
<feature type="binding site" evidence="1">
    <location>
        <position position="83"/>
    </location>
    <ligand>
        <name>Mo-bis(molybdopterin guanine dinucleotide)</name>
        <dbReference type="ChEBI" id="CHEBI:60539"/>
    </ligand>
</feature>
<feature type="binding site" evidence="1">
    <location>
        <position position="150"/>
    </location>
    <ligand>
        <name>Mo-bis(molybdopterin guanine dinucleotide)</name>
        <dbReference type="ChEBI" id="CHEBI:60539"/>
    </ligand>
</feature>
<feature type="binding site" evidence="1">
    <location>
        <position position="175"/>
    </location>
    <ligand>
        <name>Mo-bis(molybdopterin guanine dinucleotide)</name>
        <dbReference type="ChEBI" id="CHEBI:60539"/>
    </ligand>
</feature>
<feature type="binding site" evidence="1">
    <location>
        <position position="179"/>
    </location>
    <ligand>
        <name>Mo-bis(molybdopterin guanine dinucleotide)</name>
        <dbReference type="ChEBI" id="CHEBI:60539"/>
    </ligand>
</feature>
<feature type="binding site" evidence="1">
    <location>
        <begin position="212"/>
        <end position="219"/>
    </location>
    <ligand>
        <name>Mo-bis(molybdopterin guanine dinucleotide)</name>
        <dbReference type="ChEBI" id="CHEBI:60539"/>
    </ligand>
</feature>
<feature type="binding site" evidence="1">
    <location>
        <begin position="243"/>
        <end position="247"/>
    </location>
    <ligand>
        <name>Mo-bis(molybdopterin guanine dinucleotide)</name>
        <dbReference type="ChEBI" id="CHEBI:60539"/>
    </ligand>
</feature>
<feature type="binding site" evidence="1">
    <location>
        <begin position="262"/>
        <end position="264"/>
    </location>
    <ligand>
        <name>Mo-bis(molybdopterin guanine dinucleotide)</name>
        <dbReference type="ChEBI" id="CHEBI:60539"/>
    </ligand>
</feature>
<feature type="binding site" evidence="1">
    <location>
        <position position="372"/>
    </location>
    <ligand>
        <name>Mo-bis(molybdopterin guanine dinucleotide)</name>
        <dbReference type="ChEBI" id="CHEBI:60539"/>
    </ligand>
</feature>
<feature type="binding site" evidence="1">
    <location>
        <position position="376"/>
    </location>
    <ligand>
        <name>Mo-bis(molybdopterin guanine dinucleotide)</name>
        <dbReference type="ChEBI" id="CHEBI:60539"/>
    </ligand>
</feature>
<feature type="binding site" evidence="1">
    <location>
        <position position="482"/>
    </location>
    <ligand>
        <name>Mo-bis(molybdopterin guanine dinucleotide)</name>
        <dbReference type="ChEBI" id="CHEBI:60539"/>
    </ligand>
</feature>
<feature type="binding site" evidence="1">
    <location>
        <begin position="508"/>
        <end position="509"/>
    </location>
    <ligand>
        <name>Mo-bis(molybdopterin guanine dinucleotide)</name>
        <dbReference type="ChEBI" id="CHEBI:60539"/>
    </ligand>
</feature>
<feature type="binding site" evidence="1">
    <location>
        <position position="531"/>
    </location>
    <ligand>
        <name>Mo-bis(molybdopterin guanine dinucleotide)</name>
        <dbReference type="ChEBI" id="CHEBI:60539"/>
    </ligand>
</feature>
<feature type="binding site" evidence="1">
    <location>
        <position position="558"/>
    </location>
    <ligand>
        <name>Mo-bis(molybdopterin guanine dinucleotide)</name>
        <dbReference type="ChEBI" id="CHEBI:60539"/>
    </ligand>
</feature>
<feature type="binding site" evidence="1">
    <location>
        <begin position="718"/>
        <end position="727"/>
    </location>
    <ligand>
        <name>Mo-bis(molybdopterin guanine dinucleotide)</name>
        <dbReference type="ChEBI" id="CHEBI:60539"/>
    </ligand>
</feature>
<feature type="binding site" evidence="1">
    <location>
        <position position="794"/>
    </location>
    <ligand>
        <name>substrate</name>
    </ligand>
</feature>
<feature type="binding site" evidence="1">
    <location>
        <position position="802"/>
    </location>
    <ligand>
        <name>Mo-bis(molybdopterin guanine dinucleotide)</name>
        <dbReference type="ChEBI" id="CHEBI:60539"/>
    </ligand>
</feature>
<feature type="binding site" evidence="1">
    <location>
        <position position="819"/>
    </location>
    <ligand>
        <name>Mo-bis(molybdopterin guanine dinucleotide)</name>
        <dbReference type="ChEBI" id="CHEBI:60539"/>
    </ligand>
</feature>
<keyword id="KW-0004">4Fe-4S</keyword>
<keyword id="KW-0249">Electron transport</keyword>
<keyword id="KW-0408">Iron</keyword>
<keyword id="KW-0411">Iron-sulfur</keyword>
<keyword id="KW-0479">Metal-binding</keyword>
<keyword id="KW-0500">Molybdenum</keyword>
<keyword id="KW-0534">Nitrate assimilation</keyword>
<keyword id="KW-0560">Oxidoreductase</keyword>
<keyword id="KW-0574">Periplasm</keyword>
<keyword id="KW-1185">Reference proteome</keyword>
<keyword id="KW-0732">Signal</keyword>
<keyword id="KW-0813">Transport</keyword>
<sequence>MKLSRRHFMKANAVAAAAAVAGITIPIAVRAATEQSDAIHWDKAPCRFCGVGCGVLVGTQNGRIVASQGDPEAPVNRGLNCIKGYFLPKIMYGQDRLTQPLLRMRNGQFDKEGEFTPISWDKAFDIMAEKFKTALKEKGPNAIGMFGSGQSTIWEGYASAKLFKAGFRSNNIDPNARHCMASAVVGFMRTFGMDEPMGCYDDIEQTDAFVLWGSNMAEMHPILWSRITDRRLSNSNVTVAVLSTYQHRSFELADNGMVFTPQTDLAILNYIANYIIQNNAVNEAFFTRHVNLRRGVTDIGYGLRPTHPLEKAAKNPGSDASEPMSFEEYKAFVADYTLEKTVAISGVPADQLEALAKLYADPKKKVISYWTMGFNQHTRGVWANNLVYNIHLLTGKISQPGCGPFSLTGQPSACGTAREVGTFAHRLPADMVVTNEKHRAIAEKLWQLPTGTIPEKIGLHAVAQDRALKDGTLNAYWVMCNNNMQAGPNINQERMPGWRDPRNFIVVSDPYPTISALAADLILPTAMWVEKEGAYGNAERRTQFWRQQVKAPGESKSDLWQVVSFAKRFTVEDVWPEELLAQKPAYRGKTLYDVLFANDVTTRFPLSELAENQLNDESREFGFYLQKGLFEEYAAFGRGHGHDLAPFDAYHKVRGLRWPVVDGKETQWRYSEGHDPYVKAGEAYRFYGKPDGKAVIFALPYEPAAEAPDEEYDLWFSTGRVLEHWHTGSMTRRVPELHRAFPEAVLFIHPQDAKARDLRRGEKVRIISRRGEVISVVETRGRNKPPRGLVYMPFFDAAQMTNVLTLDATDPLSKETDFKKCAVKLAKV</sequence>
<gene>
    <name evidence="1" type="primary">napA</name>
    <name type="ordered locus">ECA1896</name>
</gene>
<name>NAPA_PECAS</name>
<protein>
    <recommendedName>
        <fullName evidence="1">Periplasmic nitrate reductase</fullName>
        <ecNumber evidence="1">1.9.6.1</ecNumber>
    </recommendedName>
</protein>
<proteinExistence type="inferred from homology"/>
<reference key="1">
    <citation type="journal article" date="2004" name="Proc. Natl. Acad. Sci. U.S.A.">
        <title>Genome sequence of the enterobacterial phytopathogen Erwinia carotovora subsp. atroseptica and characterization of virulence factors.</title>
        <authorList>
            <person name="Bell K.S."/>
            <person name="Sebaihia M."/>
            <person name="Pritchard L."/>
            <person name="Holden M.T.G."/>
            <person name="Hyman L.J."/>
            <person name="Holeva M.C."/>
            <person name="Thomson N.R."/>
            <person name="Bentley S.D."/>
            <person name="Churcher L.J.C."/>
            <person name="Mungall K."/>
            <person name="Atkin R."/>
            <person name="Bason N."/>
            <person name="Brooks K."/>
            <person name="Chillingworth T."/>
            <person name="Clark K."/>
            <person name="Doggett J."/>
            <person name="Fraser A."/>
            <person name="Hance Z."/>
            <person name="Hauser H."/>
            <person name="Jagels K."/>
            <person name="Moule S."/>
            <person name="Norbertczak H."/>
            <person name="Ormond D."/>
            <person name="Price C."/>
            <person name="Quail M.A."/>
            <person name="Sanders M."/>
            <person name="Walker D."/>
            <person name="Whitehead S."/>
            <person name="Salmond G.P.C."/>
            <person name="Birch P.R.J."/>
            <person name="Parkhill J."/>
            <person name="Toth I.K."/>
        </authorList>
    </citation>
    <scope>NUCLEOTIDE SEQUENCE [LARGE SCALE GENOMIC DNA]</scope>
    <source>
        <strain>SCRI 1043 / ATCC BAA-672</strain>
    </source>
</reference>